<sequence>VLSPADKTNVKAAWDKVGGNAGEYGAEALERMFLSFPTTKTYFPHFDLAHGSPQVKGHGKKVGDALTNAVSHIDDLPGALSALSDLHAYKLRVDPVNFKLLSHCLLVTLANHLPSDFTPAVHASLDKFLASVSTVLTSKYR</sequence>
<comment type="function">
    <text>Involved in oxygen transport from the lung to the various peripheral tissues.</text>
</comment>
<comment type="function">
    <molecule>Hemopressin</molecule>
    <text evidence="2">Hemopressin acts as an antagonist peptide of the cannabinoid receptor CNR1. Hemopressin-binding efficiently blocks cannabinoid receptor CNR1 and subsequent signaling.</text>
</comment>
<comment type="subunit">
    <text>Heterotetramer of two alpha chains and two beta chains.</text>
</comment>
<comment type="tissue specificity">
    <text>Red blood cells.</text>
</comment>
<comment type="similarity">
    <text evidence="4">Belongs to the globin family.</text>
</comment>
<organism>
    <name type="scientific">Cynopterus sphinx</name>
    <name type="common">Indian short-nosed fruit bat</name>
    <dbReference type="NCBI Taxonomy" id="9400"/>
    <lineage>
        <taxon>Eukaryota</taxon>
        <taxon>Metazoa</taxon>
        <taxon>Chordata</taxon>
        <taxon>Craniata</taxon>
        <taxon>Vertebrata</taxon>
        <taxon>Euteleostomi</taxon>
        <taxon>Mammalia</taxon>
        <taxon>Eutheria</taxon>
        <taxon>Laurasiatheria</taxon>
        <taxon>Chiroptera</taxon>
        <taxon>Yinpterochiroptera</taxon>
        <taxon>Pteropodoidea</taxon>
        <taxon>Pteropodidae</taxon>
        <taxon>Cynopterinae</taxon>
        <taxon>Cynopterus</taxon>
    </lineage>
</organism>
<accession>P11753</accession>
<feature type="chain" id="PRO_0000052614" description="Hemoglobin subunit alpha">
    <location>
        <begin position="1"/>
        <end position="141"/>
    </location>
</feature>
<feature type="peptide" id="PRO_0000455863" description="Hemopressin" evidence="2">
    <location>
        <begin position="95"/>
        <end position="103"/>
    </location>
</feature>
<feature type="domain" description="Globin" evidence="4">
    <location>
        <begin position="1"/>
        <end position="141"/>
    </location>
</feature>
<feature type="binding site" evidence="4">
    <location>
        <position position="58"/>
    </location>
    <ligand>
        <name>O2</name>
        <dbReference type="ChEBI" id="CHEBI:15379"/>
    </ligand>
</feature>
<feature type="binding site" description="proximal binding residue" evidence="4">
    <location>
        <position position="87"/>
    </location>
    <ligand>
        <name>heme b</name>
        <dbReference type="ChEBI" id="CHEBI:60344"/>
    </ligand>
    <ligandPart>
        <name>Fe</name>
        <dbReference type="ChEBI" id="CHEBI:18248"/>
    </ligandPart>
</feature>
<feature type="modified residue" description="Phosphoserine" evidence="3">
    <location>
        <position position="3"/>
    </location>
</feature>
<feature type="modified residue" description="N6-succinyllysine" evidence="1">
    <location>
        <position position="7"/>
    </location>
</feature>
<feature type="modified residue" description="Phosphothreonine" evidence="3">
    <location>
        <position position="8"/>
    </location>
</feature>
<feature type="modified residue" description="N6-succinyllysine" evidence="1">
    <location>
        <position position="11"/>
    </location>
</feature>
<feature type="modified residue" description="N6-acetyllysine; alternate" evidence="3">
    <location>
        <position position="16"/>
    </location>
</feature>
<feature type="modified residue" description="N6-succinyllysine; alternate" evidence="1">
    <location>
        <position position="16"/>
    </location>
</feature>
<feature type="modified residue" description="Phosphotyrosine" evidence="3">
    <location>
        <position position="24"/>
    </location>
</feature>
<feature type="modified residue" description="Phosphoserine" evidence="3">
    <location>
        <position position="35"/>
    </location>
</feature>
<feature type="modified residue" description="N6-succinyllysine" evidence="1">
    <location>
        <position position="40"/>
    </location>
</feature>
<feature type="modified residue" description="Phosphoserine" evidence="1">
    <location>
        <position position="102"/>
    </location>
</feature>
<feature type="modified residue" description="Phosphothreonine" evidence="1">
    <location>
        <position position="108"/>
    </location>
</feature>
<feature type="modified residue" description="Phosphoserine" evidence="1">
    <location>
        <position position="124"/>
    </location>
</feature>
<feature type="modified residue" description="Phosphoserine" evidence="1">
    <location>
        <position position="131"/>
    </location>
</feature>
<feature type="modified residue" description="Phosphothreonine" evidence="1">
    <location>
        <position position="134"/>
    </location>
</feature>
<feature type="modified residue" description="Phosphothreonine" evidence="1">
    <location>
        <position position="137"/>
    </location>
</feature>
<feature type="modified residue" description="Phosphoserine" evidence="1">
    <location>
        <position position="138"/>
    </location>
</feature>
<name>HBA_CYNSP</name>
<dbReference type="PIR" id="A29392">
    <property type="entry name" value="A29392"/>
</dbReference>
<dbReference type="SMR" id="P11753"/>
<dbReference type="GO" id="GO:0072562">
    <property type="term" value="C:blood microparticle"/>
    <property type="evidence" value="ECO:0007669"/>
    <property type="project" value="TreeGrafter"/>
</dbReference>
<dbReference type="GO" id="GO:0031838">
    <property type="term" value="C:haptoglobin-hemoglobin complex"/>
    <property type="evidence" value="ECO:0007669"/>
    <property type="project" value="TreeGrafter"/>
</dbReference>
<dbReference type="GO" id="GO:0005833">
    <property type="term" value="C:hemoglobin complex"/>
    <property type="evidence" value="ECO:0007669"/>
    <property type="project" value="InterPro"/>
</dbReference>
<dbReference type="GO" id="GO:0031720">
    <property type="term" value="F:haptoglobin binding"/>
    <property type="evidence" value="ECO:0007669"/>
    <property type="project" value="TreeGrafter"/>
</dbReference>
<dbReference type="GO" id="GO:0020037">
    <property type="term" value="F:heme binding"/>
    <property type="evidence" value="ECO:0007669"/>
    <property type="project" value="InterPro"/>
</dbReference>
<dbReference type="GO" id="GO:0005506">
    <property type="term" value="F:iron ion binding"/>
    <property type="evidence" value="ECO:0007669"/>
    <property type="project" value="InterPro"/>
</dbReference>
<dbReference type="GO" id="GO:0043177">
    <property type="term" value="F:organic acid binding"/>
    <property type="evidence" value="ECO:0007669"/>
    <property type="project" value="TreeGrafter"/>
</dbReference>
<dbReference type="GO" id="GO:0019825">
    <property type="term" value="F:oxygen binding"/>
    <property type="evidence" value="ECO:0007669"/>
    <property type="project" value="InterPro"/>
</dbReference>
<dbReference type="GO" id="GO:0005344">
    <property type="term" value="F:oxygen carrier activity"/>
    <property type="evidence" value="ECO:0007669"/>
    <property type="project" value="UniProtKB-KW"/>
</dbReference>
<dbReference type="GO" id="GO:0004601">
    <property type="term" value="F:peroxidase activity"/>
    <property type="evidence" value="ECO:0007669"/>
    <property type="project" value="TreeGrafter"/>
</dbReference>
<dbReference type="GO" id="GO:0042744">
    <property type="term" value="P:hydrogen peroxide catabolic process"/>
    <property type="evidence" value="ECO:0007669"/>
    <property type="project" value="TreeGrafter"/>
</dbReference>
<dbReference type="CDD" id="cd08927">
    <property type="entry name" value="Hb-alpha-like"/>
    <property type="match status" value="1"/>
</dbReference>
<dbReference type="FunFam" id="1.10.490.10:FF:000002">
    <property type="entry name" value="Hemoglobin subunit alpha"/>
    <property type="match status" value="1"/>
</dbReference>
<dbReference type="Gene3D" id="1.10.490.10">
    <property type="entry name" value="Globins"/>
    <property type="match status" value="1"/>
</dbReference>
<dbReference type="InterPro" id="IPR000971">
    <property type="entry name" value="Globin"/>
</dbReference>
<dbReference type="InterPro" id="IPR009050">
    <property type="entry name" value="Globin-like_sf"/>
</dbReference>
<dbReference type="InterPro" id="IPR012292">
    <property type="entry name" value="Globin/Proto"/>
</dbReference>
<dbReference type="InterPro" id="IPR002338">
    <property type="entry name" value="Hemoglobin_a-typ"/>
</dbReference>
<dbReference type="InterPro" id="IPR050056">
    <property type="entry name" value="Hemoglobin_oxygen_transport"/>
</dbReference>
<dbReference type="InterPro" id="IPR002339">
    <property type="entry name" value="Hemoglobin_pi"/>
</dbReference>
<dbReference type="PANTHER" id="PTHR11442">
    <property type="entry name" value="HEMOGLOBIN FAMILY MEMBER"/>
    <property type="match status" value="1"/>
</dbReference>
<dbReference type="PANTHER" id="PTHR11442:SF48">
    <property type="entry name" value="HEMOGLOBIN SUBUNIT ALPHA"/>
    <property type="match status" value="1"/>
</dbReference>
<dbReference type="Pfam" id="PF00042">
    <property type="entry name" value="Globin"/>
    <property type="match status" value="1"/>
</dbReference>
<dbReference type="PRINTS" id="PR00612">
    <property type="entry name" value="ALPHAHAEM"/>
</dbReference>
<dbReference type="PRINTS" id="PR00815">
    <property type="entry name" value="PIHAEM"/>
</dbReference>
<dbReference type="SUPFAM" id="SSF46458">
    <property type="entry name" value="Globin-like"/>
    <property type="match status" value="1"/>
</dbReference>
<dbReference type="PROSITE" id="PS01033">
    <property type="entry name" value="GLOBIN"/>
    <property type="match status" value="1"/>
</dbReference>
<gene>
    <name type="primary">HBA</name>
</gene>
<reference key="1">
    <citation type="journal article" date="1987" name="Biol. Chem. Hoppe-Seyler">
        <title>The primary structure of the hemoglobin of an Indian flying fox (Cynopterus sphinx, Megachiroptera).</title>
        <authorList>
            <person name="Sgouros J.G."/>
            <person name="Kleinschmidt T."/>
            <person name="Braunitzer G."/>
        </authorList>
    </citation>
    <scope>PROTEIN SEQUENCE</scope>
</reference>
<evidence type="ECO:0000250" key="1">
    <source>
        <dbReference type="UniProtKB" id="P01942"/>
    </source>
</evidence>
<evidence type="ECO:0000250" key="2">
    <source>
        <dbReference type="UniProtKB" id="P01946"/>
    </source>
</evidence>
<evidence type="ECO:0000250" key="3">
    <source>
        <dbReference type="UniProtKB" id="P69905"/>
    </source>
</evidence>
<evidence type="ECO:0000255" key="4">
    <source>
        <dbReference type="PROSITE-ProRule" id="PRU00238"/>
    </source>
</evidence>
<keyword id="KW-0007">Acetylation</keyword>
<keyword id="KW-0903">Direct protein sequencing</keyword>
<keyword id="KW-0349">Heme</keyword>
<keyword id="KW-0408">Iron</keyword>
<keyword id="KW-0479">Metal-binding</keyword>
<keyword id="KW-0561">Oxygen transport</keyword>
<keyword id="KW-0597">Phosphoprotein</keyword>
<keyword id="KW-0813">Transport</keyword>
<protein>
    <recommendedName>
        <fullName>Hemoglobin subunit alpha</fullName>
    </recommendedName>
    <alternativeName>
        <fullName>Alpha-globin</fullName>
    </alternativeName>
    <alternativeName>
        <fullName>Hemoglobin alpha chain</fullName>
    </alternativeName>
    <component>
        <recommendedName>
            <fullName evidence="2">Hemopressin</fullName>
        </recommendedName>
    </component>
</protein>
<proteinExistence type="evidence at protein level"/>